<organism>
    <name type="scientific">Arabidopsis thaliana</name>
    <name type="common">Mouse-ear cress</name>
    <dbReference type="NCBI Taxonomy" id="3702"/>
    <lineage>
        <taxon>Eukaryota</taxon>
        <taxon>Viridiplantae</taxon>
        <taxon>Streptophyta</taxon>
        <taxon>Embryophyta</taxon>
        <taxon>Tracheophyta</taxon>
        <taxon>Spermatophyta</taxon>
        <taxon>Magnoliopsida</taxon>
        <taxon>eudicotyledons</taxon>
        <taxon>Gunneridae</taxon>
        <taxon>Pentapetalae</taxon>
        <taxon>rosids</taxon>
        <taxon>malvids</taxon>
        <taxon>Brassicales</taxon>
        <taxon>Brassicaceae</taxon>
        <taxon>Camelineae</taxon>
        <taxon>Arabidopsis</taxon>
    </lineage>
</organism>
<sequence>MTVDSALRSPMMHSPSTKDVKALRFIEEMTRNVDFVQKKVIREILSRNSDTEYLKRFGLKGFTDRKTFKTKVPVVIYDDLKPEIQRIANGDRSMILSSYPITEFLTSSGTSAGERKLMPTIDEDMDRRQLLYSLLMPVMNLYVPGLDKGKALYFLFVKTESKTPGGLPARPVLTSYYKSEQFKRRPNDPYNVYTSPNEAILCPDSSQSMYTQMLCGLLMRHEVLRLGAVFASGLLRAIGFLQTNWKELADDISTGTLSSRISDPAIKESMSKILTKPDQELADFITSVCGQDNSWEGIITKIWPNTKYLDVIVTGAMAQYIPMLEYYSGGLPMACTMYASSESYFGINLKPMCKPSEVSYTIMPNMAYFEFLPHHEVPTEKSELVELADVEVGKEYELVITTYAGLNRYRVGDILQVTGFYNSAPQFKFVRRKNVLLSIESDKTDEAELQSAVENASLLLGEQGTRVIEYTSYAETKTIPGHYVIYWELLVKDQTNPPNDEVMARCCLEMEESLNSVYRQSRVADKSIGPLEIRVVKNGTFEELMDYAISRGASINQYKVPRCVSFTPIMELLDSRVVSTHFSPALPHWSPERRR</sequence>
<name>GH33_ARATH</name>
<protein>
    <recommendedName>
        <fullName>Indole-3-acetic acid-amido synthetase GH3.3</fullName>
        <ecNumber>6.3.2.-</ecNumber>
    </recommendedName>
    <alternativeName>
        <fullName>Auxin-responsive GH3-like protein 3</fullName>
        <shortName>AtGH3-3</shortName>
    </alternativeName>
</protein>
<feature type="chain" id="PRO_0000203572" description="Indole-3-acetic acid-amido synthetase GH3.3">
    <location>
        <begin position="1"/>
        <end position="595"/>
    </location>
</feature>
<evidence type="ECO:0000269" key="1">
    <source>
    </source>
</evidence>
<evidence type="ECO:0000305" key="2"/>
<reference key="1">
    <citation type="journal article" date="1999" name="Nature">
        <title>Sequence and analysis of chromosome 2 of the plant Arabidopsis thaliana.</title>
        <authorList>
            <person name="Lin X."/>
            <person name="Kaul S."/>
            <person name="Rounsley S.D."/>
            <person name="Shea T.P."/>
            <person name="Benito M.-I."/>
            <person name="Town C.D."/>
            <person name="Fujii C.Y."/>
            <person name="Mason T.M."/>
            <person name="Bowman C.L."/>
            <person name="Barnstead M.E."/>
            <person name="Feldblyum T.V."/>
            <person name="Buell C.R."/>
            <person name="Ketchum K.A."/>
            <person name="Lee J.J."/>
            <person name="Ronning C.M."/>
            <person name="Koo H.L."/>
            <person name="Moffat K.S."/>
            <person name="Cronin L.A."/>
            <person name="Shen M."/>
            <person name="Pai G."/>
            <person name="Van Aken S."/>
            <person name="Umayam L."/>
            <person name="Tallon L.J."/>
            <person name="Gill J.E."/>
            <person name="Adams M.D."/>
            <person name="Carrera A.J."/>
            <person name="Creasy T.H."/>
            <person name="Goodman H.M."/>
            <person name="Somerville C.R."/>
            <person name="Copenhaver G.P."/>
            <person name="Preuss D."/>
            <person name="Nierman W.C."/>
            <person name="White O."/>
            <person name="Eisen J.A."/>
            <person name="Salzberg S.L."/>
            <person name="Fraser C.M."/>
            <person name="Venter J.C."/>
        </authorList>
    </citation>
    <scope>NUCLEOTIDE SEQUENCE [LARGE SCALE GENOMIC DNA]</scope>
    <source>
        <strain>cv. Columbia</strain>
    </source>
</reference>
<reference key="2">
    <citation type="journal article" date="2017" name="Plant J.">
        <title>Araport11: a complete reannotation of the Arabidopsis thaliana reference genome.</title>
        <authorList>
            <person name="Cheng C.Y."/>
            <person name="Krishnakumar V."/>
            <person name="Chan A.P."/>
            <person name="Thibaud-Nissen F."/>
            <person name="Schobel S."/>
            <person name="Town C.D."/>
        </authorList>
    </citation>
    <scope>GENOME REANNOTATION</scope>
    <source>
        <strain>cv. Columbia</strain>
    </source>
</reference>
<reference key="3">
    <citation type="journal article" date="2003" name="Science">
        <title>Empirical analysis of transcriptional activity in the Arabidopsis genome.</title>
        <authorList>
            <person name="Yamada K."/>
            <person name="Lim J."/>
            <person name="Dale J.M."/>
            <person name="Chen H."/>
            <person name="Shinn P."/>
            <person name="Palm C.J."/>
            <person name="Southwick A.M."/>
            <person name="Wu H.C."/>
            <person name="Kim C.J."/>
            <person name="Nguyen M."/>
            <person name="Pham P.K."/>
            <person name="Cheuk R.F."/>
            <person name="Karlin-Newmann G."/>
            <person name="Liu S.X."/>
            <person name="Lam B."/>
            <person name="Sakano H."/>
            <person name="Wu T."/>
            <person name="Yu G."/>
            <person name="Miranda M."/>
            <person name="Quach H.L."/>
            <person name="Tripp M."/>
            <person name="Chang C.H."/>
            <person name="Lee J.M."/>
            <person name="Toriumi M.J."/>
            <person name="Chan M.M."/>
            <person name="Tang C.C."/>
            <person name="Onodera C.S."/>
            <person name="Deng J.M."/>
            <person name="Akiyama K."/>
            <person name="Ansari Y."/>
            <person name="Arakawa T."/>
            <person name="Banh J."/>
            <person name="Banno F."/>
            <person name="Bowser L."/>
            <person name="Brooks S.Y."/>
            <person name="Carninci P."/>
            <person name="Chao Q."/>
            <person name="Choy N."/>
            <person name="Enju A."/>
            <person name="Goldsmith A.D."/>
            <person name="Gurjal M."/>
            <person name="Hansen N.F."/>
            <person name="Hayashizaki Y."/>
            <person name="Johnson-Hopson C."/>
            <person name="Hsuan V.W."/>
            <person name="Iida K."/>
            <person name="Karnes M."/>
            <person name="Khan S."/>
            <person name="Koesema E."/>
            <person name="Ishida J."/>
            <person name="Jiang P.X."/>
            <person name="Jones T."/>
            <person name="Kawai J."/>
            <person name="Kamiya A."/>
            <person name="Meyers C."/>
            <person name="Nakajima M."/>
            <person name="Narusaka M."/>
            <person name="Seki M."/>
            <person name="Sakurai T."/>
            <person name="Satou M."/>
            <person name="Tamse R."/>
            <person name="Vaysberg M."/>
            <person name="Wallender E.K."/>
            <person name="Wong C."/>
            <person name="Yamamura Y."/>
            <person name="Yuan S."/>
            <person name="Shinozaki K."/>
            <person name="Davis R.W."/>
            <person name="Theologis A."/>
            <person name="Ecker J.R."/>
        </authorList>
    </citation>
    <scope>NUCLEOTIDE SEQUENCE [LARGE SCALE MRNA]</scope>
    <source>
        <strain>cv. Columbia</strain>
    </source>
</reference>
<reference key="4">
    <citation type="journal article" date="2005" name="Plant Cell">
        <title>Characterization of an Arabidopsis enzyme family that conjugates amino acids to indole-3-acetic acid.</title>
        <authorList>
            <person name="Staswick P.E."/>
            <person name="Serban B."/>
            <person name="Rowe M."/>
            <person name="Tiryaki I."/>
            <person name="Maldonado M.T."/>
            <person name="Maldonado M.C."/>
            <person name="Suza W."/>
        </authorList>
    </citation>
    <scope>FUNCTION</scope>
    <scope>CHARACTERIZATION</scope>
    <scope>INDUCTION</scope>
</reference>
<reference key="5">
    <citation type="journal article" date="2002" name="Plant Mol. Biol.">
        <title>Auxin-responsive gene expression: genes, promoters and regulatory factors.</title>
        <authorList>
            <person name="Hagen G."/>
            <person name="Guilfoyle T.J."/>
        </authorList>
    </citation>
    <scope>NOMENCLATURE</scope>
</reference>
<keyword id="KW-0436">Ligase</keyword>
<keyword id="KW-1185">Reference proteome</keyword>
<gene>
    <name type="primary">GH3.3</name>
    <name type="ordered locus">At2g23170</name>
    <name type="ORF">T20D16.20</name>
</gene>
<dbReference type="EC" id="6.3.2.-"/>
<dbReference type="EMBL" id="AC002391">
    <property type="protein sequence ID" value="AAB87114.1"/>
    <property type="molecule type" value="Genomic_DNA"/>
</dbReference>
<dbReference type="EMBL" id="CP002685">
    <property type="protein sequence ID" value="AEC07424.1"/>
    <property type="molecule type" value="Genomic_DNA"/>
</dbReference>
<dbReference type="EMBL" id="AY090371">
    <property type="protein sequence ID" value="AAL91274.1"/>
    <property type="molecule type" value="mRNA"/>
</dbReference>
<dbReference type="EMBL" id="BT000823">
    <property type="protein sequence ID" value="AAN33198.1"/>
    <property type="molecule type" value="mRNA"/>
</dbReference>
<dbReference type="PIR" id="T00515">
    <property type="entry name" value="T00515"/>
</dbReference>
<dbReference type="RefSeq" id="NP_179898.1">
    <property type="nucleotide sequence ID" value="NM_127881.3"/>
</dbReference>
<dbReference type="SMR" id="O22190"/>
<dbReference type="BioGRID" id="2202">
    <property type="interactions" value="1"/>
</dbReference>
<dbReference type="FunCoup" id="O22190">
    <property type="interactions" value="1164"/>
</dbReference>
<dbReference type="STRING" id="3702.O22190"/>
<dbReference type="MetOSite" id="O22190"/>
<dbReference type="PaxDb" id="3702-AT2G23170.1"/>
<dbReference type="ProteomicsDB" id="220749"/>
<dbReference type="EnsemblPlants" id="AT2G23170.1">
    <property type="protein sequence ID" value="AT2G23170.1"/>
    <property type="gene ID" value="AT2G23170"/>
</dbReference>
<dbReference type="GeneID" id="816849"/>
<dbReference type="Gramene" id="AT2G23170.1">
    <property type="protein sequence ID" value="AT2G23170.1"/>
    <property type="gene ID" value="AT2G23170"/>
</dbReference>
<dbReference type="KEGG" id="ath:AT2G23170"/>
<dbReference type="Araport" id="AT2G23170"/>
<dbReference type="TAIR" id="AT2G23170">
    <property type="gene designation" value="GH3.3"/>
</dbReference>
<dbReference type="eggNOG" id="ENOG502QPMW">
    <property type="taxonomic scope" value="Eukaryota"/>
</dbReference>
<dbReference type="HOGENOM" id="CLU_016249_2_1_1"/>
<dbReference type="InParanoid" id="O22190"/>
<dbReference type="OMA" id="NFAPIME"/>
<dbReference type="PhylomeDB" id="O22190"/>
<dbReference type="BioCyc" id="ARA:AT2G23170-MONOMER"/>
<dbReference type="PRO" id="PR:O22190"/>
<dbReference type="Proteomes" id="UP000006548">
    <property type="component" value="Chromosome 2"/>
</dbReference>
<dbReference type="ExpressionAtlas" id="O22190">
    <property type="expression patterns" value="baseline and differential"/>
</dbReference>
<dbReference type="GO" id="GO:0010279">
    <property type="term" value="F:indole-3-acetic acid amido synthetase activity"/>
    <property type="evidence" value="ECO:0000314"/>
    <property type="project" value="TAIR"/>
</dbReference>
<dbReference type="InterPro" id="IPR004993">
    <property type="entry name" value="GH3"/>
</dbReference>
<dbReference type="InterPro" id="IPR055378">
    <property type="entry name" value="GH3_C"/>
</dbReference>
<dbReference type="InterPro" id="IPR055377">
    <property type="entry name" value="GH3_M"/>
</dbReference>
<dbReference type="PANTHER" id="PTHR31901">
    <property type="entry name" value="GH3 DOMAIN-CONTAINING PROTEIN"/>
    <property type="match status" value="1"/>
</dbReference>
<dbReference type="PANTHER" id="PTHR31901:SF55">
    <property type="entry name" value="INDOLE-3-ACETIC ACID-AMIDO SYNTHETASE GH3.3"/>
    <property type="match status" value="1"/>
</dbReference>
<dbReference type="Pfam" id="PF03321">
    <property type="entry name" value="GH3"/>
    <property type="match status" value="1"/>
</dbReference>
<dbReference type="Pfam" id="PF23572">
    <property type="entry name" value="GH3_C"/>
    <property type="match status" value="1"/>
</dbReference>
<dbReference type="Pfam" id="PF23571">
    <property type="entry name" value="GH3_M"/>
    <property type="match status" value="1"/>
</dbReference>
<accession>O22190</accession>
<comment type="function">
    <text evidence="1">Catalyzes the synthesis of indole-3-acetic acid (IAA)-amino acid conjugates, providing a mechanism for the plant to cope with the presence of excess auxin. Strongly reactive with Glu, Gln, Trp, Asp, Ala, Leu, Phe, Gly, Tyr, Met, Ile and Val. Little or no product formation with His, Ser, Thr, Arg, Lys, or Cys. Also active on pyruvic and butyric acid analogs of IAA, PAA and the synthetic auxin naphthaleneacetic acid (NAA). The two chlorinated synthetic auxin herbicides 2,4-D and 3,6-dichloro-o-anisic acid (dicamba) cannot be used as substrates.</text>
</comment>
<comment type="induction">
    <text evidence="1">By auxin.</text>
</comment>
<comment type="similarity">
    <text evidence="2">Belongs to the IAA-amido conjugating enzyme family.</text>
</comment>
<proteinExistence type="evidence at protein level"/>